<comment type="function">
    <text evidence="3">Component of the deuterosome, a structure that promotes de novo centriole amplification in multiciliated cells that can generate more than 100 centrioles. Deuterosome-mediated centriole amplification occurs in terminally differentiated multiciliated cells (G1/0) and not in S phase. Essential for centriole amplification and is required for cep152 localization to the deuterosome.</text>
</comment>
<comment type="subcellular location">
    <subcellularLocation>
        <location evidence="3">Cytoplasm</location>
        <location evidence="3">Cytoskeleton</location>
        <location evidence="3">Microtubule organizing center</location>
        <location evidence="3">Centrosome</location>
        <location evidence="3">Centriole</location>
    </subcellularLocation>
    <text>Localizes to centrioles and deuterosome.</text>
</comment>
<comment type="tissue specificity">
    <text evidence="3">Restricted to multiciliated cells.</text>
</comment>
<comment type="induction">
    <text evidence="3">Highly up-regulated in the ciliated epithelia of embryonic skin during the developmental window of centriole biogenesis. Expression is probably activated by mcidas/mcin.</text>
</comment>
<comment type="similarity">
    <text evidence="4">Belongs to the CCDC78 family.</text>
</comment>
<name>CCD78_XENLA</name>
<reference key="1">
    <citation type="submission" date="2004-08" db="EMBL/GenBank/DDBJ databases">
        <authorList>
            <consortium name="NIH - Xenopus Gene Collection (XGC) project"/>
        </authorList>
    </citation>
    <scope>NUCLEOTIDE SEQUENCE [LARGE SCALE MRNA]</scope>
    <source>
        <tissue>Embryo</tissue>
    </source>
</reference>
<reference key="2">
    <citation type="journal article" date="2013" name="Dev. Cell">
        <title>Deuterosome-mediated centriole biogenesis.</title>
        <authorList>
            <person name="Klos Dehring D.A."/>
            <person name="Vladar E.K."/>
            <person name="Werner M.E."/>
            <person name="Mitchell J.W."/>
            <person name="Hwang P."/>
            <person name="Mitchell B.J."/>
        </authorList>
    </citation>
    <scope>FUNCTION</scope>
    <scope>SUBCELLULAR LOCATION</scope>
    <scope>TISSUE SPECIFICITY</scope>
    <scope>INDUCTION</scope>
</reference>
<sequence length="559" mass="65184">MDSTEDRETPLKDQIRRLTNENVQLQDRNERLYAKLGELQDKMGKLAGSKTDLSSKLVLSEEEKLKISKELIELQIETNKIREHYEAETFELKNTILTLENRLMSLELQKEKLAGEHESVKERLQAVDANRKELADEYIVLKSNYLALSKEHEKEVAKNDELSMELLNLASRRGQDETYSQSRALVNEATAELDRVKAMVNRLSARNIKPEDLVATEYERQKLERNLLGNQDHIREEIENMKKIHETQQQRLEERIIAMGKELQEAKRAIRNTQHKMAEQSAVLLTSQSQLQETEAQNSHLQLQLKELNEEYRSRLNRYIQDLADYVDGTARSKGDGTRMKHFVDNMLSDIKASHRSREEQLAGAARQYKKRMQNLIKKHQSLLIAYRMQREQLLASGNQDVEPGPPEHHFTITDPELQSQVGLELNRLREDKARLETQIHDLKEKKRLSDAGTSNQHVEHGGKLQEESWAEIRKQLREFTHNTQEELERERSQLLSRALVAEEQVAELQDYVDKHLARYKQEILRLRKLLGNEEQRAVSADAPQSLLIRALRRNSHEM</sequence>
<protein>
    <recommendedName>
        <fullName>Coiled-coil domain-containing protein 78</fullName>
    </recommendedName>
    <alternativeName>
        <fullName>xCCDC78</fullName>
    </alternativeName>
</protein>
<proteinExistence type="evidence at transcript level"/>
<feature type="chain" id="PRO_0000424819" description="Coiled-coil domain-containing protein 78">
    <location>
        <begin position="1"/>
        <end position="559"/>
    </location>
</feature>
<feature type="region of interest" description="Disordered" evidence="2">
    <location>
        <begin position="1"/>
        <end position="20"/>
    </location>
</feature>
<feature type="coiled-coil region" evidence="1">
    <location>
        <begin position="9"/>
        <end position="327"/>
    </location>
</feature>
<feature type="coiled-coil region" evidence="1">
    <location>
        <begin position="419"/>
        <end position="541"/>
    </location>
</feature>
<feature type="compositionally biased region" description="Basic and acidic residues" evidence="2">
    <location>
        <begin position="1"/>
        <end position="19"/>
    </location>
</feature>
<keyword id="KW-0970">Cilium biogenesis/degradation</keyword>
<keyword id="KW-0175">Coiled coil</keyword>
<keyword id="KW-0963">Cytoplasm</keyword>
<keyword id="KW-0206">Cytoskeleton</keyword>
<keyword id="KW-1185">Reference proteome</keyword>
<organism>
    <name type="scientific">Xenopus laevis</name>
    <name type="common">African clawed frog</name>
    <dbReference type="NCBI Taxonomy" id="8355"/>
    <lineage>
        <taxon>Eukaryota</taxon>
        <taxon>Metazoa</taxon>
        <taxon>Chordata</taxon>
        <taxon>Craniata</taxon>
        <taxon>Vertebrata</taxon>
        <taxon>Euteleostomi</taxon>
        <taxon>Amphibia</taxon>
        <taxon>Batrachia</taxon>
        <taxon>Anura</taxon>
        <taxon>Pipoidea</taxon>
        <taxon>Pipidae</taxon>
        <taxon>Xenopodinae</taxon>
        <taxon>Xenopus</taxon>
        <taxon>Xenopus</taxon>
    </lineage>
</organism>
<evidence type="ECO:0000255" key="1"/>
<evidence type="ECO:0000256" key="2">
    <source>
        <dbReference type="SAM" id="MobiDB-lite"/>
    </source>
</evidence>
<evidence type="ECO:0000269" key="3">
    <source>
    </source>
</evidence>
<evidence type="ECO:0000305" key="4"/>
<dbReference type="EMBL" id="BC080433">
    <property type="protein sequence ID" value="AAH80433.1"/>
    <property type="molecule type" value="mRNA"/>
</dbReference>
<dbReference type="RefSeq" id="NP_001087605.1">
    <property type="nucleotide sequence ID" value="NM_001094136.1"/>
</dbReference>
<dbReference type="SMR" id="Q66KE8"/>
<dbReference type="DNASU" id="447429"/>
<dbReference type="GeneID" id="447429"/>
<dbReference type="KEGG" id="xla:447429"/>
<dbReference type="AGR" id="Xenbase:XB-GENE-5895378"/>
<dbReference type="CTD" id="447429"/>
<dbReference type="Xenbase" id="XB-GENE-5895378">
    <property type="gene designation" value="ccdc78.S"/>
</dbReference>
<dbReference type="OrthoDB" id="2113965at2759"/>
<dbReference type="Proteomes" id="UP000186698">
    <property type="component" value="Chromosome 9_10S"/>
</dbReference>
<dbReference type="Bgee" id="447429">
    <property type="expression patterns" value="Expressed in brain and 9 other cell types or tissues"/>
</dbReference>
<dbReference type="GO" id="GO:0005814">
    <property type="term" value="C:centriole"/>
    <property type="evidence" value="ECO:0000314"/>
    <property type="project" value="UniProtKB"/>
</dbReference>
<dbReference type="GO" id="GO:0005737">
    <property type="term" value="C:cytoplasm"/>
    <property type="evidence" value="ECO:0000318"/>
    <property type="project" value="GO_Central"/>
</dbReference>
<dbReference type="GO" id="GO:0098536">
    <property type="term" value="C:deuterosome"/>
    <property type="evidence" value="ECO:0000314"/>
    <property type="project" value="UniProtKB"/>
</dbReference>
<dbReference type="GO" id="GO:0030030">
    <property type="term" value="P:cell projection organization"/>
    <property type="evidence" value="ECO:0007669"/>
    <property type="project" value="UniProtKB-KW"/>
</dbReference>
<dbReference type="GO" id="GO:0098535">
    <property type="term" value="P:de novo centriole assembly involved in multi-ciliated epithelial cell differentiation"/>
    <property type="evidence" value="ECO:0000314"/>
    <property type="project" value="UniProtKB"/>
</dbReference>
<dbReference type="InterPro" id="IPR039873">
    <property type="entry name" value="CCDC78"/>
</dbReference>
<dbReference type="InterPro" id="IPR029329">
    <property type="entry name" value="DUF4472"/>
</dbReference>
<dbReference type="PANTHER" id="PTHR22106">
    <property type="entry name" value="COILED-COIL DOMAIN-CONTAINING PROTEIN 78"/>
    <property type="match status" value="1"/>
</dbReference>
<dbReference type="PANTHER" id="PTHR22106:SF5">
    <property type="entry name" value="COILED-COIL DOMAIN-CONTAINING PROTEIN 78"/>
    <property type="match status" value="1"/>
</dbReference>
<dbReference type="Pfam" id="PF14739">
    <property type="entry name" value="DUF4472"/>
    <property type="match status" value="1"/>
</dbReference>
<accession>Q66KE8</accession>
<gene>
    <name type="primary">ccdc78</name>
</gene>